<accession>P9WIK0</accession>
<accession>L0T670</accession>
<accession>P65670</accession>
<accession>Q10599</accession>
<proteinExistence type="inferred from homology"/>
<name>CYSD_MYCTO</name>
<feature type="chain" id="PRO_0000427993" description="Sulfate adenylyltransferase subunit 2">
    <location>
        <begin position="1"/>
        <end position="309"/>
    </location>
</feature>
<comment type="function">
    <text evidence="2">With CysN forms the ATP sulfurylase (ATPS) that catalyzes the adenylation of sulfate producing adenosine 5'-phosphosulfate (APS) and diphosphate, the first enzymatic step in sulfur assimilation pathway. APS synthesis involves the formation of a high-energy phosphoric-sulfuric acid anhydride bond driven by GTP hydrolysis by CysN coupled to ATP hydrolysis by CysD.</text>
</comment>
<comment type="catalytic activity">
    <reaction evidence="2">
        <text>sulfate + ATP + H(+) = adenosine 5'-phosphosulfate + diphosphate</text>
        <dbReference type="Rhea" id="RHEA:18133"/>
        <dbReference type="ChEBI" id="CHEBI:15378"/>
        <dbReference type="ChEBI" id="CHEBI:16189"/>
        <dbReference type="ChEBI" id="CHEBI:30616"/>
        <dbReference type="ChEBI" id="CHEBI:33019"/>
        <dbReference type="ChEBI" id="CHEBI:58243"/>
        <dbReference type="EC" id="2.7.7.4"/>
    </reaction>
</comment>
<comment type="pathway">
    <text evidence="2">Sulfur metabolism; hydrogen sulfide biosynthesis; sulfite from sulfate: step 1/3.</text>
</comment>
<comment type="subunit">
    <text evidence="1">Heterodimer composed of CysD, the smaller subunit, and CysNC.</text>
</comment>
<comment type="similarity">
    <text evidence="2 3">Belongs to the PAPS reductase family. CysD subfamily.</text>
</comment>
<organism>
    <name type="scientific">Mycobacterium tuberculosis (strain CDC 1551 / Oshkosh)</name>
    <dbReference type="NCBI Taxonomy" id="83331"/>
    <lineage>
        <taxon>Bacteria</taxon>
        <taxon>Bacillati</taxon>
        <taxon>Actinomycetota</taxon>
        <taxon>Actinomycetes</taxon>
        <taxon>Mycobacteriales</taxon>
        <taxon>Mycobacteriaceae</taxon>
        <taxon>Mycobacterium</taxon>
        <taxon>Mycobacterium tuberculosis complex</taxon>
    </lineage>
</organism>
<dbReference type="EC" id="2.7.7.4" evidence="2"/>
<dbReference type="EMBL" id="AE000516">
    <property type="protein sequence ID" value="AAK45584.1"/>
    <property type="molecule type" value="Genomic_DNA"/>
</dbReference>
<dbReference type="PIR" id="A70772">
    <property type="entry name" value="A70772"/>
</dbReference>
<dbReference type="SMR" id="P9WIK0"/>
<dbReference type="KEGG" id="mtc:MT1323"/>
<dbReference type="HOGENOM" id="CLU_043026_0_0_11"/>
<dbReference type="UniPathway" id="UPA00140">
    <property type="reaction ID" value="UER00204"/>
</dbReference>
<dbReference type="Proteomes" id="UP000001020">
    <property type="component" value="Chromosome"/>
</dbReference>
<dbReference type="GO" id="GO:0005524">
    <property type="term" value="F:ATP binding"/>
    <property type="evidence" value="ECO:0007669"/>
    <property type="project" value="UniProtKB-KW"/>
</dbReference>
<dbReference type="GO" id="GO:0004781">
    <property type="term" value="F:sulfate adenylyltransferase (ATP) activity"/>
    <property type="evidence" value="ECO:0007669"/>
    <property type="project" value="UniProtKB-UniRule"/>
</dbReference>
<dbReference type="GO" id="GO:0070814">
    <property type="term" value="P:hydrogen sulfide biosynthetic process"/>
    <property type="evidence" value="ECO:0007669"/>
    <property type="project" value="UniProtKB-UniRule"/>
</dbReference>
<dbReference type="GO" id="GO:0000103">
    <property type="term" value="P:sulfate assimilation"/>
    <property type="evidence" value="ECO:0007669"/>
    <property type="project" value="UniProtKB-UniRule"/>
</dbReference>
<dbReference type="FunFam" id="3.40.50.620:FF:000002">
    <property type="entry name" value="Sulfate adenylyltransferase subunit 2"/>
    <property type="match status" value="1"/>
</dbReference>
<dbReference type="Gene3D" id="3.40.50.620">
    <property type="entry name" value="HUPs"/>
    <property type="match status" value="1"/>
</dbReference>
<dbReference type="HAMAP" id="MF_00064">
    <property type="entry name" value="Sulf_adenylyltr_sub2"/>
    <property type="match status" value="1"/>
</dbReference>
<dbReference type="InterPro" id="IPR002500">
    <property type="entry name" value="PAPS_reduct_dom"/>
</dbReference>
<dbReference type="InterPro" id="IPR014729">
    <property type="entry name" value="Rossmann-like_a/b/a_fold"/>
</dbReference>
<dbReference type="InterPro" id="IPR011784">
    <property type="entry name" value="SO4_adenylTrfase_ssu"/>
</dbReference>
<dbReference type="InterPro" id="IPR050128">
    <property type="entry name" value="Sulfate_adenylyltrnsfr_sub2"/>
</dbReference>
<dbReference type="NCBIfam" id="TIGR02039">
    <property type="entry name" value="CysD"/>
    <property type="match status" value="1"/>
</dbReference>
<dbReference type="NCBIfam" id="NF003587">
    <property type="entry name" value="PRK05253.1"/>
    <property type="match status" value="1"/>
</dbReference>
<dbReference type="NCBIfam" id="NF009214">
    <property type="entry name" value="PRK12563.1"/>
    <property type="match status" value="1"/>
</dbReference>
<dbReference type="PANTHER" id="PTHR43196">
    <property type="entry name" value="SULFATE ADENYLYLTRANSFERASE SUBUNIT 2"/>
    <property type="match status" value="1"/>
</dbReference>
<dbReference type="PANTHER" id="PTHR43196:SF1">
    <property type="entry name" value="SULFATE ADENYLYLTRANSFERASE SUBUNIT 2"/>
    <property type="match status" value="1"/>
</dbReference>
<dbReference type="Pfam" id="PF01507">
    <property type="entry name" value="PAPS_reduct"/>
    <property type="match status" value="1"/>
</dbReference>
<dbReference type="PIRSF" id="PIRSF002936">
    <property type="entry name" value="CysDAde_trans"/>
    <property type="match status" value="1"/>
</dbReference>
<dbReference type="SUPFAM" id="SSF52402">
    <property type="entry name" value="Adenine nucleotide alpha hydrolases-like"/>
    <property type="match status" value="1"/>
</dbReference>
<gene>
    <name evidence="2" type="primary">cysD</name>
    <name type="ordered locus">MT1323</name>
</gene>
<sequence length="309" mass="34889">MTSDVTVGPAPGQYQLSHLRLLEAEAIHVIREVAAEFERPVLLFSGGKDSIVMLHLALKAFRPGRLPFPVMHVDTGHNFDEVIATRDELVAAAGVRLVVASVQDDIDAGRVVETIPSRNPIQTVTLLRAIRENQFDAAFGGARRDEEKARAKERVFSFRDEFGQWDPKAQRPELWNLYNGRHHKGEHIRVFPLSNWTEFDIWSYIGAEQVRLPSIYFAHRRKVFQRDGMLLAVHRHMQPRADEPVFEATVRFRTVGDVTCTGCVESSASTVAEVIAETAVARLTERGATRADDRISEAGMEDRKRQGYF</sequence>
<protein>
    <recommendedName>
        <fullName evidence="2">Sulfate adenylyltransferase subunit 2</fullName>
        <ecNumber evidence="2">2.7.7.4</ecNumber>
    </recommendedName>
    <alternativeName>
        <fullName evidence="2">ATP-sulfurylase small subunit</fullName>
    </alternativeName>
    <alternativeName>
        <fullName evidence="2">Sulfate adenylate transferase</fullName>
        <shortName evidence="2">SAT</shortName>
    </alternativeName>
</protein>
<evidence type="ECO:0000250" key="1"/>
<evidence type="ECO:0000255" key="2">
    <source>
        <dbReference type="HAMAP-Rule" id="MF_00064"/>
    </source>
</evidence>
<evidence type="ECO:0000305" key="3"/>
<reference key="1">
    <citation type="journal article" date="2002" name="J. Bacteriol.">
        <title>Whole-genome comparison of Mycobacterium tuberculosis clinical and laboratory strains.</title>
        <authorList>
            <person name="Fleischmann R.D."/>
            <person name="Alland D."/>
            <person name="Eisen J.A."/>
            <person name="Carpenter L."/>
            <person name="White O."/>
            <person name="Peterson J.D."/>
            <person name="DeBoy R.T."/>
            <person name="Dodson R.J."/>
            <person name="Gwinn M.L."/>
            <person name="Haft D.H."/>
            <person name="Hickey E.K."/>
            <person name="Kolonay J.F."/>
            <person name="Nelson W.C."/>
            <person name="Umayam L.A."/>
            <person name="Ermolaeva M.D."/>
            <person name="Salzberg S.L."/>
            <person name="Delcher A."/>
            <person name="Utterback T.R."/>
            <person name="Weidman J.F."/>
            <person name="Khouri H.M."/>
            <person name="Gill J."/>
            <person name="Mikula A."/>
            <person name="Bishai W."/>
            <person name="Jacobs W.R. Jr."/>
            <person name="Venter J.C."/>
            <person name="Fraser C.M."/>
        </authorList>
    </citation>
    <scope>NUCLEOTIDE SEQUENCE [LARGE SCALE GENOMIC DNA]</scope>
    <source>
        <strain>CDC 1551 / Oshkosh</strain>
    </source>
</reference>
<keyword id="KW-0067">ATP-binding</keyword>
<keyword id="KW-0547">Nucleotide-binding</keyword>
<keyword id="KW-0548">Nucleotidyltransferase</keyword>
<keyword id="KW-1185">Reference proteome</keyword>
<keyword id="KW-0808">Transferase</keyword>